<reference key="1">
    <citation type="journal article" date="2005" name="J. Bacteriol.">
        <title>Insights on evolution of virulence and resistance from the complete genome analysis of an early methicillin-resistant Staphylococcus aureus strain and a biofilm-producing methicillin-resistant Staphylococcus epidermidis strain.</title>
        <authorList>
            <person name="Gill S.R."/>
            <person name="Fouts D.E."/>
            <person name="Archer G.L."/>
            <person name="Mongodin E.F."/>
            <person name="DeBoy R.T."/>
            <person name="Ravel J."/>
            <person name="Paulsen I.T."/>
            <person name="Kolonay J.F."/>
            <person name="Brinkac L.M."/>
            <person name="Beanan M.J."/>
            <person name="Dodson R.J."/>
            <person name="Daugherty S.C."/>
            <person name="Madupu R."/>
            <person name="Angiuoli S.V."/>
            <person name="Durkin A.S."/>
            <person name="Haft D.H."/>
            <person name="Vamathevan J.J."/>
            <person name="Khouri H."/>
            <person name="Utterback T.R."/>
            <person name="Lee C."/>
            <person name="Dimitrov G."/>
            <person name="Jiang L."/>
            <person name="Qin H."/>
            <person name="Weidman J."/>
            <person name="Tran K."/>
            <person name="Kang K.H."/>
            <person name="Hance I.R."/>
            <person name="Nelson K.E."/>
            <person name="Fraser C.M."/>
        </authorList>
    </citation>
    <scope>NUCLEOTIDE SEQUENCE [LARGE SCALE GENOMIC DNA]</scope>
    <source>
        <strain>ATCC 35984 / DSM 28319 / BCRC 17069 / CCUG 31568 / BM 3577 / RP62A</strain>
    </source>
</reference>
<evidence type="ECO:0000255" key="1">
    <source>
        <dbReference type="HAMAP-Rule" id="MF_00135"/>
    </source>
</evidence>
<accession>Q5HPH1</accession>
<gene>
    <name evidence="1" type="primary">trpF</name>
    <name type="ordered locus">SERP0941</name>
</gene>
<sequence>MIVKFCGFKTESDIKKIKKLEVDAVGFIHYPDSKRHVSLKQLKYLAKIVPDHIEKVVVVVNPQMSTIKRIINQTDINTIQLHGNESIQLIRNIKKLNSKIRIIKAIPATRNLNNNIQKYKDEIDMFIIDTPSITYGGTGQSFDWKLLKKIKGVDFLIAGGLDFEKIKRLEIYSFGQCGYDISTGIESHNEKDFNKMTRILKFLKGDE</sequence>
<protein>
    <recommendedName>
        <fullName evidence="1">N-(5'-phosphoribosyl)anthranilate isomerase</fullName>
        <shortName evidence="1">PRAI</shortName>
        <ecNumber evidence="1">5.3.1.24</ecNumber>
    </recommendedName>
</protein>
<feature type="chain" id="PRO_0000154383" description="N-(5'-phosphoribosyl)anthranilate isomerase">
    <location>
        <begin position="1"/>
        <end position="207"/>
    </location>
</feature>
<organism>
    <name type="scientific">Staphylococcus epidermidis (strain ATCC 35984 / DSM 28319 / BCRC 17069 / CCUG 31568 / BM 3577 / RP62A)</name>
    <dbReference type="NCBI Taxonomy" id="176279"/>
    <lineage>
        <taxon>Bacteria</taxon>
        <taxon>Bacillati</taxon>
        <taxon>Bacillota</taxon>
        <taxon>Bacilli</taxon>
        <taxon>Bacillales</taxon>
        <taxon>Staphylococcaceae</taxon>
        <taxon>Staphylococcus</taxon>
    </lineage>
</organism>
<keyword id="KW-0028">Amino-acid biosynthesis</keyword>
<keyword id="KW-0057">Aromatic amino acid biosynthesis</keyword>
<keyword id="KW-0413">Isomerase</keyword>
<keyword id="KW-1185">Reference proteome</keyword>
<keyword id="KW-0822">Tryptophan biosynthesis</keyword>
<dbReference type="EC" id="5.3.1.24" evidence="1"/>
<dbReference type="EMBL" id="CP000029">
    <property type="protein sequence ID" value="AAW54338.1"/>
    <property type="molecule type" value="Genomic_DNA"/>
</dbReference>
<dbReference type="RefSeq" id="WP_001832767.1">
    <property type="nucleotide sequence ID" value="NC_002976.3"/>
</dbReference>
<dbReference type="SMR" id="Q5HPH1"/>
<dbReference type="STRING" id="176279.SERP0941"/>
<dbReference type="DNASU" id="3242084"/>
<dbReference type="KEGG" id="ser:SERP0941"/>
<dbReference type="eggNOG" id="COG0135">
    <property type="taxonomic scope" value="Bacteria"/>
</dbReference>
<dbReference type="HOGENOM" id="CLU_076364_1_2_9"/>
<dbReference type="UniPathway" id="UPA00035">
    <property type="reaction ID" value="UER00042"/>
</dbReference>
<dbReference type="Proteomes" id="UP000000531">
    <property type="component" value="Chromosome"/>
</dbReference>
<dbReference type="GO" id="GO:0004640">
    <property type="term" value="F:phosphoribosylanthranilate isomerase activity"/>
    <property type="evidence" value="ECO:0007669"/>
    <property type="project" value="UniProtKB-UniRule"/>
</dbReference>
<dbReference type="GO" id="GO:0000162">
    <property type="term" value="P:L-tryptophan biosynthetic process"/>
    <property type="evidence" value="ECO:0007669"/>
    <property type="project" value="UniProtKB-UniRule"/>
</dbReference>
<dbReference type="CDD" id="cd00405">
    <property type="entry name" value="PRAI"/>
    <property type="match status" value="1"/>
</dbReference>
<dbReference type="Gene3D" id="3.20.20.70">
    <property type="entry name" value="Aldolase class I"/>
    <property type="match status" value="1"/>
</dbReference>
<dbReference type="HAMAP" id="MF_00135">
    <property type="entry name" value="PRAI"/>
    <property type="match status" value="1"/>
</dbReference>
<dbReference type="InterPro" id="IPR013785">
    <property type="entry name" value="Aldolase_TIM"/>
</dbReference>
<dbReference type="InterPro" id="IPR001240">
    <property type="entry name" value="PRAI_dom"/>
</dbReference>
<dbReference type="InterPro" id="IPR011060">
    <property type="entry name" value="RibuloseP-bd_barrel"/>
</dbReference>
<dbReference type="InterPro" id="IPR044643">
    <property type="entry name" value="TrpF_fam"/>
</dbReference>
<dbReference type="NCBIfam" id="NF010563">
    <property type="entry name" value="PRK13958.1"/>
    <property type="match status" value="1"/>
</dbReference>
<dbReference type="PANTHER" id="PTHR42894">
    <property type="entry name" value="N-(5'-PHOSPHORIBOSYL)ANTHRANILATE ISOMERASE"/>
    <property type="match status" value="1"/>
</dbReference>
<dbReference type="PANTHER" id="PTHR42894:SF1">
    <property type="entry name" value="N-(5'-PHOSPHORIBOSYL)ANTHRANILATE ISOMERASE"/>
    <property type="match status" value="1"/>
</dbReference>
<dbReference type="Pfam" id="PF00697">
    <property type="entry name" value="PRAI"/>
    <property type="match status" value="1"/>
</dbReference>
<dbReference type="SUPFAM" id="SSF51366">
    <property type="entry name" value="Ribulose-phoshate binding barrel"/>
    <property type="match status" value="1"/>
</dbReference>
<name>TRPF_STAEQ</name>
<proteinExistence type="inferred from homology"/>
<comment type="catalytic activity">
    <reaction evidence="1">
        <text>N-(5-phospho-beta-D-ribosyl)anthranilate = 1-(2-carboxyphenylamino)-1-deoxy-D-ribulose 5-phosphate</text>
        <dbReference type="Rhea" id="RHEA:21540"/>
        <dbReference type="ChEBI" id="CHEBI:18277"/>
        <dbReference type="ChEBI" id="CHEBI:58613"/>
        <dbReference type="EC" id="5.3.1.24"/>
    </reaction>
</comment>
<comment type="pathway">
    <text evidence="1">Amino-acid biosynthesis; L-tryptophan biosynthesis; L-tryptophan from chorismate: step 3/5.</text>
</comment>
<comment type="similarity">
    <text evidence="1">Belongs to the TrpF family.</text>
</comment>